<protein>
    <recommendedName>
        <fullName evidence="1">Glutamate--tRNA ligase 1</fullName>
        <ecNumber evidence="1">6.1.1.17</ecNumber>
    </recommendedName>
    <alternativeName>
        <fullName evidence="1">Glutamyl-tRNA synthetase 1</fullName>
        <shortName evidence="1">GluRS 1</shortName>
    </alternativeName>
</protein>
<comment type="function">
    <text evidence="1">Catalyzes the attachment of glutamate to tRNA(Glu) in a two-step reaction: glutamate is first activated by ATP to form Glu-AMP and then transferred to the acceptor end of tRNA(Glu).</text>
</comment>
<comment type="catalytic activity">
    <reaction evidence="1">
        <text>tRNA(Glu) + L-glutamate + ATP = L-glutamyl-tRNA(Glu) + AMP + diphosphate</text>
        <dbReference type="Rhea" id="RHEA:23540"/>
        <dbReference type="Rhea" id="RHEA-COMP:9663"/>
        <dbReference type="Rhea" id="RHEA-COMP:9680"/>
        <dbReference type="ChEBI" id="CHEBI:29985"/>
        <dbReference type="ChEBI" id="CHEBI:30616"/>
        <dbReference type="ChEBI" id="CHEBI:33019"/>
        <dbReference type="ChEBI" id="CHEBI:78442"/>
        <dbReference type="ChEBI" id="CHEBI:78520"/>
        <dbReference type="ChEBI" id="CHEBI:456215"/>
        <dbReference type="EC" id="6.1.1.17"/>
    </reaction>
</comment>
<comment type="subunit">
    <text evidence="1">Monomer.</text>
</comment>
<comment type="subcellular location">
    <subcellularLocation>
        <location evidence="1">Cytoplasm</location>
    </subcellularLocation>
</comment>
<comment type="similarity">
    <text evidence="1">Belongs to the class-I aminoacyl-tRNA synthetase family. Glutamate--tRNA ligase type 1 subfamily.</text>
</comment>
<dbReference type="EC" id="6.1.1.17" evidence="1"/>
<dbReference type="EMBL" id="CP000812">
    <property type="protein sequence ID" value="ABV33331.1"/>
    <property type="molecule type" value="Genomic_DNA"/>
</dbReference>
<dbReference type="SMR" id="A8F597"/>
<dbReference type="STRING" id="416591.Tlet_0765"/>
<dbReference type="KEGG" id="tle:Tlet_0765"/>
<dbReference type="eggNOG" id="COG0008">
    <property type="taxonomic scope" value="Bacteria"/>
</dbReference>
<dbReference type="HOGENOM" id="CLU_015768_6_3_0"/>
<dbReference type="OrthoDB" id="9807503at2"/>
<dbReference type="Proteomes" id="UP000002016">
    <property type="component" value="Chromosome"/>
</dbReference>
<dbReference type="GO" id="GO:0005829">
    <property type="term" value="C:cytosol"/>
    <property type="evidence" value="ECO:0007669"/>
    <property type="project" value="TreeGrafter"/>
</dbReference>
<dbReference type="GO" id="GO:0005524">
    <property type="term" value="F:ATP binding"/>
    <property type="evidence" value="ECO:0007669"/>
    <property type="project" value="UniProtKB-UniRule"/>
</dbReference>
<dbReference type="GO" id="GO:0004818">
    <property type="term" value="F:glutamate-tRNA ligase activity"/>
    <property type="evidence" value="ECO:0007669"/>
    <property type="project" value="UniProtKB-UniRule"/>
</dbReference>
<dbReference type="GO" id="GO:0000049">
    <property type="term" value="F:tRNA binding"/>
    <property type="evidence" value="ECO:0007669"/>
    <property type="project" value="InterPro"/>
</dbReference>
<dbReference type="GO" id="GO:0008270">
    <property type="term" value="F:zinc ion binding"/>
    <property type="evidence" value="ECO:0007669"/>
    <property type="project" value="InterPro"/>
</dbReference>
<dbReference type="GO" id="GO:0006424">
    <property type="term" value="P:glutamyl-tRNA aminoacylation"/>
    <property type="evidence" value="ECO:0007669"/>
    <property type="project" value="UniProtKB-UniRule"/>
</dbReference>
<dbReference type="CDD" id="cd00808">
    <property type="entry name" value="GluRS_core"/>
    <property type="match status" value="1"/>
</dbReference>
<dbReference type="FunFam" id="3.40.50.620:FF:000045">
    <property type="entry name" value="Glutamate--tRNA ligase, mitochondrial"/>
    <property type="match status" value="1"/>
</dbReference>
<dbReference type="Gene3D" id="1.10.10.350">
    <property type="match status" value="1"/>
</dbReference>
<dbReference type="Gene3D" id="1.10.8.70">
    <property type="entry name" value="Glutamate-tRNA synthetase, class I, anticodon-binding domain 1"/>
    <property type="match status" value="1"/>
</dbReference>
<dbReference type="Gene3D" id="3.40.50.620">
    <property type="entry name" value="HUPs"/>
    <property type="match status" value="1"/>
</dbReference>
<dbReference type="HAMAP" id="MF_00022">
    <property type="entry name" value="Glu_tRNA_synth_type1"/>
    <property type="match status" value="1"/>
</dbReference>
<dbReference type="InterPro" id="IPR045462">
    <property type="entry name" value="aa-tRNA-synth_I_cd-bd"/>
</dbReference>
<dbReference type="InterPro" id="IPR020751">
    <property type="entry name" value="aa-tRNA-synth_I_codon-bd_sub2"/>
</dbReference>
<dbReference type="InterPro" id="IPR001412">
    <property type="entry name" value="aa-tRNA-synth_I_CS"/>
</dbReference>
<dbReference type="InterPro" id="IPR008925">
    <property type="entry name" value="aa_tRNA-synth_I_cd-bd_sf"/>
</dbReference>
<dbReference type="InterPro" id="IPR004527">
    <property type="entry name" value="Glu-tRNA-ligase_bac/mito"/>
</dbReference>
<dbReference type="InterPro" id="IPR020752">
    <property type="entry name" value="Glu-tRNA-synth_I_codon-bd_sub1"/>
</dbReference>
<dbReference type="InterPro" id="IPR000924">
    <property type="entry name" value="Glu/Gln-tRNA-synth"/>
</dbReference>
<dbReference type="InterPro" id="IPR020058">
    <property type="entry name" value="Glu/Gln-tRNA-synth_Ib_cat-dom"/>
</dbReference>
<dbReference type="InterPro" id="IPR049940">
    <property type="entry name" value="GluQ/Sye"/>
</dbReference>
<dbReference type="InterPro" id="IPR033910">
    <property type="entry name" value="GluRS_core"/>
</dbReference>
<dbReference type="InterPro" id="IPR014729">
    <property type="entry name" value="Rossmann-like_a/b/a_fold"/>
</dbReference>
<dbReference type="NCBIfam" id="TIGR00464">
    <property type="entry name" value="gltX_bact"/>
    <property type="match status" value="1"/>
</dbReference>
<dbReference type="PANTHER" id="PTHR43311">
    <property type="entry name" value="GLUTAMATE--TRNA LIGASE"/>
    <property type="match status" value="1"/>
</dbReference>
<dbReference type="PANTHER" id="PTHR43311:SF2">
    <property type="entry name" value="GLUTAMATE--TRNA LIGASE, MITOCHONDRIAL-RELATED"/>
    <property type="match status" value="1"/>
</dbReference>
<dbReference type="Pfam" id="PF19269">
    <property type="entry name" value="Anticodon_2"/>
    <property type="match status" value="1"/>
</dbReference>
<dbReference type="Pfam" id="PF00749">
    <property type="entry name" value="tRNA-synt_1c"/>
    <property type="match status" value="1"/>
</dbReference>
<dbReference type="PRINTS" id="PR00987">
    <property type="entry name" value="TRNASYNTHGLU"/>
</dbReference>
<dbReference type="SUPFAM" id="SSF48163">
    <property type="entry name" value="An anticodon-binding domain of class I aminoacyl-tRNA synthetases"/>
    <property type="match status" value="1"/>
</dbReference>
<dbReference type="SUPFAM" id="SSF52374">
    <property type="entry name" value="Nucleotidylyl transferase"/>
    <property type="match status" value="1"/>
</dbReference>
<dbReference type="PROSITE" id="PS00178">
    <property type="entry name" value="AA_TRNA_LIGASE_I"/>
    <property type="match status" value="1"/>
</dbReference>
<evidence type="ECO:0000255" key="1">
    <source>
        <dbReference type="HAMAP-Rule" id="MF_00022"/>
    </source>
</evidence>
<proteinExistence type="inferred from homology"/>
<name>SYE1_PSELT</name>
<organism>
    <name type="scientific">Pseudothermotoga lettingae (strain ATCC BAA-301 / DSM 14385 / NBRC 107922 / TMO)</name>
    <name type="common">Thermotoga lettingae</name>
    <dbReference type="NCBI Taxonomy" id="416591"/>
    <lineage>
        <taxon>Bacteria</taxon>
        <taxon>Thermotogati</taxon>
        <taxon>Thermotogota</taxon>
        <taxon>Thermotogae</taxon>
        <taxon>Thermotogales</taxon>
        <taxon>Thermotogaceae</taxon>
        <taxon>Pseudothermotoga</taxon>
    </lineage>
</organism>
<keyword id="KW-0030">Aminoacyl-tRNA synthetase</keyword>
<keyword id="KW-0067">ATP-binding</keyword>
<keyword id="KW-0963">Cytoplasm</keyword>
<keyword id="KW-0436">Ligase</keyword>
<keyword id="KW-0547">Nucleotide-binding</keyword>
<keyword id="KW-0648">Protein biosynthesis</keyword>
<keyword id="KW-1185">Reference proteome</keyword>
<gene>
    <name evidence="1" type="primary">gltX1</name>
    <name type="ordered locus">Tlet_0765</name>
</gene>
<accession>A8F597</accession>
<sequence>MVRVRFAPSPTGYLHVGGARTALFNYLFAKHHGGKFILRIEDTDIARSEGIFEENLMKTLQWLGLNWDEGPDIGGSFGPYRQSERLNIYEEYAKKLIALDKAYEVFAYPEEIEEIREKLLSKGLTPHYDRTIFEPFATKERKREYEEKGLKPAIYFSMPRKAFIHNDLVKGTVQFSEGSVGDFAILRSNGIPTYNFACVVDDMLMQITHVIRGDDHLPNTVKQLALYEAFSARPPEIGHVSTILGPDGKKLSKRHGATSIEELRERGYLPQAVVNYLALLGWSSPDAKEIMSMQEMIERFSIDRLSKNPAIFDPAKLSWMNGQYIRSTNEEELEQLLKPLLEKWNFIPRNQDWLRRVIIAVKDRLHTLEDFQHVADFFFVKPEIKTETEYQIKCAMLECADKLESLDRSDKNSIVEVFRSTIKKQKVSAKEFYSTLRYVLTGKHEGPELVDIVFLLGPNEVAARIKSILG</sequence>
<feature type="chain" id="PRO_0000367788" description="Glutamate--tRNA ligase 1">
    <location>
        <begin position="1"/>
        <end position="470"/>
    </location>
</feature>
<feature type="short sequence motif" description="'HIGH' region" evidence="1">
    <location>
        <begin position="8"/>
        <end position="18"/>
    </location>
</feature>
<feature type="short sequence motif" description="'KMSKS' region" evidence="1">
    <location>
        <begin position="250"/>
        <end position="254"/>
    </location>
</feature>
<feature type="binding site" evidence="1">
    <location>
        <position position="253"/>
    </location>
    <ligand>
        <name>ATP</name>
        <dbReference type="ChEBI" id="CHEBI:30616"/>
    </ligand>
</feature>
<reference key="1">
    <citation type="submission" date="2007-08" db="EMBL/GenBank/DDBJ databases">
        <title>Complete sequence of Thermotoga lettingae TMO.</title>
        <authorList>
            <consortium name="US DOE Joint Genome Institute"/>
            <person name="Copeland A."/>
            <person name="Lucas S."/>
            <person name="Lapidus A."/>
            <person name="Barry K."/>
            <person name="Glavina del Rio T."/>
            <person name="Dalin E."/>
            <person name="Tice H."/>
            <person name="Pitluck S."/>
            <person name="Foster B."/>
            <person name="Bruce D."/>
            <person name="Schmutz J."/>
            <person name="Larimer F."/>
            <person name="Land M."/>
            <person name="Hauser L."/>
            <person name="Kyrpides N."/>
            <person name="Mikhailova N."/>
            <person name="Nelson K."/>
            <person name="Gogarten J.P."/>
            <person name="Noll K."/>
            <person name="Richardson P."/>
        </authorList>
    </citation>
    <scope>NUCLEOTIDE SEQUENCE [LARGE SCALE GENOMIC DNA]</scope>
    <source>
        <strain>ATCC BAA-301 / DSM 14385 / NBRC 107922 / TMO</strain>
    </source>
</reference>